<dbReference type="EMBL" id="AL009126">
    <property type="protein sequence ID" value="CAB14030.1"/>
    <property type="molecule type" value="Genomic_DNA"/>
</dbReference>
<dbReference type="RefSeq" id="NP_389995.1">
    <property type="nucleotide sequence ID" value="NC_000964.3"/>
</dbReference>
<dbReference type="RefSeq" id="WP_004399314.1">
    <property type="nucleotide sequence ID" value="NZ_OZ025638.1"/>
</dbReference>
<dbReference type="FunCoup" id="O31953">
    <property type="interactions" value="120"/>
</dbReference>
<dbReference type="STRING" id="224308.BSU21120"/>
<dbReference type="PaxDb" id="224308-BSU21120"/>
<dbReference type="EnsemblBacteria" id="CAB14030">
    <property type="protein sequence ID" value="CAB14030"/>
    <property type="gene ID" value="BSU_21120"/>
</dbReference>
<dbReference type="GeneID" id="939162"/>
<dbReference type="KEGG" id="bsu:BSU21120"/>
<dbReference type="PATRIC" id="fig|224308.179.peg.2306"/>
<dbReference type="eggNOG" id="ENOG5032VQX">
    <property type="taxonomic scope" value="Bacteria"/>
</dbReference>
<dbReference type="InParanoid" id="O31953"/>
<dbReference type="OrthoDB" id="2914772at2"/>
<dbReference type="BioCyc" id="BSUB:BSU21120-MONOMER"/>
<dbReference type="Proteomes" id="UP000001570">
    <property type="component" value="Chromosome"/>
</dbReference>
<protein>
    <recommendedName>
        <fullName>SPbeta prophage-derived uncharacterized protein YonE</fullName>
    </recommendedName>
</protein>
<sequence length="506" mass="57815">MVTLNKVDIESEEYKQMLNDYSTYTSTFASGFISNMFSNGIVTEIEAEQLKNYFSNPDEFQEEIEDLAQYFYISTAEIHQLFELIEALPTLNYKIDSFNKVKSSDKHISLLNKSLHKVKHKRLTRDLLKQVATAGTLVGIWLGDAKSPYPFIFDEIKYVFPSFRRNGDWVCVVDMELFTKYKDDQRNELLKSLSPYIKQSDYENFMKDREKYRFKELPQERTFPLRTGTLKRNQGLGTSWVTPGLYDVLHKKKLKDVERSIANKIINAVAVLTIGTDKGNGEYTNMKLPKAVKQKIHGGVKTALEKNQKDGVTVVSIPDFADINFPDVKADGLDGAKFDHINSDIQSAYGLSGSLLNGDGGNYATSSLNLDTFYKRIGVLMEDIEQEVYQKLFNLVLPAAQKDNYYMNYDKDKPLTLKEKMDILIKLNDKGWSIKHVVDNLAGVSWESYLEQTLYETEELKLQEKIRPYQTSYTFTGNEVGRPNEGNKNNDNTVKSATSNGNDNPI</sequence>
<evidence type="ECO:0000256" key="1">
    <source>
        <dbReference type="SAM" id="MobiDB-lite"/>
    </source>
</evidence>
<name>YONE_BACSU</name>
<keyword id="KW-1185">Reference proteome</keyword>
<accession>O31953</accession>
<reference key="1">
    <citation type="journal article" date="1997" name="Nature">
        <title>The complete genome sequence of the Gram-positive bacterium Bacillus subtilis.</title>
        <authorList>
            <person name="Kunst F."/>
            <person name="Ogasawara N."/>
            <person name="Moszer I."/>
            <person name="Albertini A.M."/>
            <person name="Alloni G."/>
            <person name="Azevedo V."/>
            <person name="Bertero M.G."/>
            <person name="Bessieres P."/>
            <person name="Bolotin A."/>
            <person name="Borchert S."/>
            <person name="Borriss R."/>
            <person name="Boursier L."/>
            <person name="Brans A."/>
            <person name="Braun M."/>
            <person name="Brignell S.C."/>
            <person name="Bron S."/>
            <person name="Brouillet S."/>
            <person name="Bruschi C.V."/>
            <person name="Caldwell B."/>
            <person name="Capuano V."/>
            <person name="Carter N.M."/>
            <person name="Choi S.-K."/>
            <person name="Codani J.-J."/>
            <person name="Connerton I.F."/>
            <person name="Cummings N.J."/>
            <person name="Daniel R.A."/>
            <person name="Denizot F."/>
            <person name="Devine K.M."/>
            <person name="Duesterhoeft A."/>
            <person name="Ehrlich S.D."/>
            <person name="Emmerson P.T."/>
            <person name="Entian K.-D."/>
            <person name="Errington J."/>
            <person name="Fabret C."/>
            <person name="Ferrari E."/>
            <person name="Foulger D."/>
            <person name="Fritz C."/>
            <person name="Fujita M."/>
            <person name="Fujita Y."/>
            <person name="Fuma S."/>
            <person name="Galizzi A."/>
            <person name="Galleron N."/>
            <person name="Ghim S.-Y."/>
            <person name="Glaser P."/>
            <person name="Goffeau A."/>
            <person name="Golightly E.J."/>
            <person name="Grandi G."/>
            <person name="Guiseppi G."/>
            <person name="Guy B.J."/>
            <person name="Haga K."/>
            <person name="Haiech J."/>
            <person name="Harwood C.R."/>
            <person name="Henaut A."/>
            <person name="Hilbert H."/>
            <person name="Holsappel S."/>
            <person name="Hosono S."/>
            <person name="Hullo M.-F."/>
            <person name="Itaya M."/>
            <person name="Jones L.-M."/>
            <person name="Joris B."/>
            <person name="Karamata D."/>
            <person name="Kasahara Y."/>
            <person name="Klaerr-Blanchard M."/>
            <person name="Klein C."/>
            <person name="Kobayashi Y."/>
            <person name="Koetter P."/>
            <person name="Koningstein G."/>
            <person name="Krogh S."/>
            <person name="Kumano M."/>
            <person name="Kurita K."/>
            <person name="Lapidus A."/>
            <person name="Lardinois S."/>
            <person name="Lauber J."/>
            <person name="Lazarevic V."/>
            <person name="Lee S.-M."/>
            <person name="Levine A."/>
            <person name="Liu H."/>
            <person name="Masuda S."/>
            <person name="Mauel C."/>
            <person name="Medigue C."/>
            <person name="Medina N."/>
            <person name="Mellado R.P."/>
            <person name="Mizuno M."/>
            <person name="Moestl D."/>
            <person name="Nakai S."/>
            <person name="Noback M."/>
            <person name="Noone D."/>
            <person name="O'Reilly M."/>
            <person name="Ogawa K."/>
            <person name="Ogiwara A."/>
            <person name="Oudega B."/>
            <person name="Park S.-H."/>
            <person name="Parro V."/>
            <person name="Pohl T.M."/>
            <person name="Portetelle D."/>
            <person name="Porwollik S."/>
            <person name="Prescott A.M."/>
            <person name="Presecan E."/>
            <person name="Pujic P."/>
            <person name="Purnelle B."/>
            <person name="Rapoport G."/>
            <person name="Rey M."/>
            <person name="Reynolds S."/>
            <person name="Rieger M."/>
            <person name="Rivolta C."/>
            <person name="Rocha E."/>
            <person name="Roche B."/>
            <person name="Rose M."/>
            <person name="Sadaie Y."/>
            <person name="Sato T."/>
            <person name="Scanlan E."/>
            <person name="Schleich S."/>
            <person name="Schroeter R."/>
            <person name="Scoffone F."/>
            <person name="Sekiguchi J."/>
            <person name="Sekowska A."/>
            <person name="Seror S.J."/>
            <person name="Serror P."/>
            <person name="Shin B.-S."/>
            <person name="Soldo B."/>
            <person name="Sorokin A."/>
            <person name="Tacconi E."/>
            <person name="Takagi T."/>
            <person name="Takahashi H."/>
            <person name="Takemaru K."/>
            <person name="Takeuchi M."/>
            <person name="Tamakoshi A."/>
            <person name="Tanaka T."/>
            <person name="Terpstra P."/>
            <person name="Tognoni A."/>
            <person name="Tosato V."/>
            <person name="Uchiyama S."/>
            <person name="Vandenbol M."/>
            <person name="Vannier F."/>
            <person name="Vassarotti A."/>
            <person name="Viari A."/>
            <person name="Wambutt R."/>
            <person name="Wedler E."/>
            <person name="Wedler H."/>
            <person name="Weitzenegger T."/>
            <person name="Winters P."/>
            <person name="Wipat A."/>
            <person name="Yamamoto H."/>
            <person name="Yamane K."/>
            <person name="Yasumoto K."/>
            <person name="Yata K."/>
            <person name="Yoshida K."/>
            <person name="Yoshikawa H.-F."/>
            <person name="Zumstein E."/>
            <person name="Yoshikawa H."/>
            <person name="Danchin A."/>
        </authorList>
    </citation>
    <scope>NUCLEOTIDE SEQUENCE [LARGE SCALE GENOMIC DNA]</scope>
    <source>
        <strain>168</strain>
    </source>
</reference>
<proteinExistence type="predicted"/>
<feature type="chain" id="PRO_0000360539" description="SPbeta prophage-derived uncharacterized protein YonE">
    <location>
        <begin position="1"/>
        <end position="506"/>
    </location>
</feature>
<feature type="region of interest" description="Disordered" evidence="1">
    <location>
        <begin position="473"/>
        <end position="506"/>
    </location>
</feature>
<feature type="compositionally biased region" description="Polar residues" evidence="1">
    <location>
        <begin position="486"/>
        <end position="506"/>
    </location>
</feature>
<gene>
    <name type="primary">yonE</name>
    <name type="ordered locus">BSU21120</name>
</gene>
<organism>
    <name type="scientific">Bacillus subtilis (strain 168)</name>
    <dbReference type="NCBI Taxonomy" id="224308"/>
    <lineage>
        <taxon>Bacteria</taxon>
        <taxon>Bacillati</taxon>
        <taxon>Bacillota</taxon>
        <taxon>Bacilli</taxon>
        <taxon>Bacillales</taxon>
        <taxon>Bacillaceae</taxon>
        <taxon>Bacillus</taxon>
    </lineage>
</organism>